<organism>
    <name type="scientific">Alteromonas mediterranea (strain DSM 17117 / CIP 110805 / LMG 28347 / Deep ecotype)</name>
    <dbReference type="NCBI Taxonomy" id="1774373"/>
    <lineage>
        <taxon>Bacteria</taxon>
        <taxon>Pseudomonadati</taxon>
        <taxon>Pseudomonadota</taxon>
        <taxon>Gammaproteobacteria</taxon>
        <taxon>Alteromonadales</taxon>
        <taxon>Alteromonadaceae</taxon>
        <taxon>Alteromonas/Salinimonas group</taxon>
        <taxon>Alteromonas</taxon>
    </lineage>
</organism>
<gene>
    <name evidence="1" type="primary">nusB</name>
    <name type="ordered locus">MADE_1012430</name>
</gene>
<name>NUSB_ALTMD</name>
<evidence type="ECO:0000255" key="1">
    <source>
        <dbReference type="HAMAP-Rule" id="MF_00073"/>
    </source>
</evidence>
<accession>B4RVY5</accession>
<accession>F2G6Y8</accession>
<protein>
    <recommendedName>
        <fullName evidence="1">Transcription antitermination protein NusB</fullName>
    </recommendedName>
    <alternativeName>
        <fullName evidence="1">Antitermination factor NusB</fullName>
    </alternativeName>
</protein>
<reference key="1">
    <citation type="journal article" date="2008" name="ISME J.">
        <title>Comparative genomics of two ecotypes of the marine planktonic copiotroph Alteromonas macleodii suggests alternative lifestyles associated with different kinds of particulate organic matter.</title>
        <authorList>
            <person name="Ivars-Martinez E."/>
            <person name="Martin-Cuadrado A.-B."/>
            <person name="D'Auria G."/>
            <person name="Mira A."/>
            <person name="Ferriera S."/>
            <person name="Johnson J."/>
            <person name="Friedman R."/>
            <person name="Rodriguez-Valera F."/>
        </authorList>
    </citation>
    <scope>NUCLEOTIDE SEQUENCE [LARGE SCALE GENOMIC DNA]</scope>
    <source>
        <strain>DSM 17117 / CIP 110805 / LMG 28347 / Deep ecotype</strain>
    </source>
</reference>
<dbReference type="EMBL" id="CP001103">
    <property type="protein sequence ID" value="AEA98622.1"/>
    <property type="molecule type" value="Genomic_DNA"/>
</dbReference>
<dbReference type="RefSeq" id="WP_012518940.1">
    <property type="nucleotide sequence ID" value="NC_011138.3"/>
</dbReference>
<dbReference type="SMR" id="B4RVY5"/>
<dbReference type="GeneID" id="56342996"/>
<dbReference type="KEGG" id="amc:MADE_1012430"/>
<dbReference type="HOGENOM" id="CLU_087843_4_1_6"/>
<dbReference type="Proteomes" id="UP000001870">
    <property type="component" value="Chromosome"/>
</dbReference>
<dbReference type="GO" id="GO:0005829">
    <property type="term" value="C:cytosol"/>
    <property type="evidence" value="ECO:0007669"/>
    <property type="project" value="TreeGrafter"/>
</dbReference>
<dbReference type="GO" id="GO:0003723">
    <property type="term" value="F:RNA binding"/>
    <property type="evidence" value="ECO:0007669"/>
    <property type="project" value="UniProtKB-UniRule"/>
</dbReference>
<dbReference type="GO" id="GO:0006353">
    <property type="term" value="P:DNA-templated transcription termination"/>
    <property type="evidence" value="ECO:0007669"/>
    <property type="project" value="UniProtKB-UniRule"/>
</dbReference>
<dbReference type="GO" id="GO:0031564">
    <property type="term" value="P:transcription antitermination"/>
    <property type="evidence" value="ECO:0007669"/>
    <property type="project" value="UniProtKB-KW"/>
</dbReference>
<dbReference type="FunFam" id="1.10.940.10:FF:000001">
    <property type="entry name" value="Transcription antitermination factor NusB"/>
    <property type="match status" value="1"/>
</dbReference>
<dbReference type="Gene3D" id="1.10.940.10">
    <property type="entry name" value="NusB-like"/>
    <property type="match status" value="1"/>
</dbReference>
<dbReference type="HAMAP" id="MF_00073">
    <property type="entry name" value="NusB"/>
    <property type="match status" value="1"/>
</dbReference>
<dbReference type="InterPro" id="IPR035926">
    <property type="entry name" value="NusB-like_sf"/>
</dbReference>
<dbReference type="InterPro" id="IPR011605">
    <property type="entry name" value="NusB_fam"/>
</dbReference>
<dbReference type="InterPro" id="IPR006027">
    <property type="entry name" value="NusB_RsmB_TIM44"/>
</dbReference>
<dbReference type="NCBIfam" id="TIGR01951">
    <property type="entry name" value="nusB"/>
    <property type="match status" value="1"/>
</dbReference>
<dbReference type="PANTHER" id="PTHR11078:SF3">
    <property type="entry name" value="ANTITERMINATION NUSB DOMAIN-CONTAINING PROTEIN"/>
    <property type="match status" value="1"/>
</dbReference>
<dbReference type="PANTHER" id="PTHR11078">
    <property type="entry name" value="N UTILIZATION SUBSTANCE PROTEIN B-RELATED"/>
    <property type="match status" value="1"/>
</dbReference>
<dbReference type="Pfam" id="PF01029">
    <property type="entry name" value="NusB"/>
    <property type="match status" value="1"/>
</dbReference>
<dbReference type="SUPFAM" id="SSF48013">
    <property type="entry name" value="NusB-like"/>
    <property type="match status" value="1"/>
</dbReference>
<keyword id="KW-0694">RNA-binding</keyword>
<keyword id="KW-0804">Transcription</keyword>
<keyword id="KW-0889">Transcription antitermination</keyword>
<keyword id="KW-0805">Transcription regulation</keyword>
<comment type="function">
    <text evidence="1">Involved in transcription antitermination. Required for transcription of ribosomal RNA (rRNA) genes. Binds specifically to the boxA antiterminator sequence of the ribosomal RNA (rrn) operons.</text>
</comment>
<comment type="similarity">
    <text evidence="1">Belongs to the NusB family.</text>
</comment>
<proteinExistence type="inferred from homology"/>
<sequence length="140" mass="15849">MKVSARRKARELALQGVYSWQMSHNDIQQVELALATSNDMQKVDMAYFQALLRGVAHNASKLDATIKPYLGRLPEELDAIEKAILRIATLELTERIDVPYRVIINEAIELAKAFGAEESHKFINGALDKAVRTLRKDERD</sequence>
<feature type="chain" id="PRO_1000092524" description="Transcription antitermination protein NusB">
    <location>
        <begin position="1"/>
        <end position="140"/>
    </location>
</feature>